<comment type="function">
    <text evidence="1">Together with its co-chaperonin GroES, plays an essential role in assisting protein folding. The GroEL-GroES system forms a nano-cage that allows encapsulation of the non-native substrate proteins and provides a physical environment optimized to promote and accelerate protein folding.</text>
</comment>
<comment type="catalytic activity">
    <reaction evidence="1">
        <text>ATP + H2O + a folded polypeptide = ADP + phosphate + an unfolded polypeptide.</text>
        <dbReference type="EC" id="5.6.1.7"/>
    </reaction>
</comment>
<comment type="subunit">
    <text evidence="1">Forms a cylinder of 14 subunits composed of two heptameric rings stacked back-to-back. Interacts with the co-chaperonin GroES.</text>
</comment>
<comment type="subcellular location">
    <subcellularLocation>
        <location evidence="1">Cytoplasm</location>
    </subcellularLocation>
</comment>
<comment type="similarity">
    <text evidence="1">Belongs to the chaperonin (HSP60) family.</text>
</comment>
<feature type="chain" id="PRO_0000256935" description="Chaperonin GroEL 3">
    <location>
        <begin position="1"/>
        <end position="545"/>
    </location>
</feature>
<feature type="binding site" evidence="1">
    <location>
        <begin position="30"/>
        <end position="33"/>
    </location>
    <ligand>
        <name>ATP</name>
        <dbReference type="ChEBI" id="CHEBI:30616"/>
    </ligand>
</feature>
<feature type="binding site" evidence="1">
    <location>
        <position position="51"/>
    </location>
    <ligand>
        <name>ATP</name>
        <dbReference type="ChEBI" id="CHEBI:30616"/>
    </ligand>
</feature>
<feature type="binding site" evidence="1">
    <location>
        <begin position="87"/>
        <end position="91"/>
    </location>
    <ligand>
        <name>ATP</name>
        <dbReference type="ChEBI" id="CHEBI:30616"/>
    </ligand>
</feature>
<feature type="binding site" evidence="1">
    <location>
        <position position="415"/>
    </location>
    <ligand>
        <name>ATP</name>
        <dbReference type="ChEBI" id="CHEBI:30616"/>
    </ligand>
</feature>
<feature type="binding site" evidence="1">
    <location>
        <position position="496"/>
    </location>
    <ligand>
        <name>ATP</name>
        <dbReference type="ChEBI" id="CHEBI:30616"/>
    </ligand>
</feature>
<sequence length="545" mass="57320">MSAKDVRFSGDARDRMLRGVDILANAVKVTLGPKGRNVVIEKSFGAPRITKDGVTVAKEIELDDRFENMGAQMVREVASKTNDTAGDGTTTATVLAQAIVREGAKAVAAGMNPMDLKRGIDIAAAAVVKDIGKRAKPVASSAEVAQVGTISSNGDTAIGKMIAQAMQKVGNEGVITVEENKSLETDVDIVEGMRFDRGYLSPYFVTNAEKMTAELDGAYILLHEKKLSGLQAILPLLEAVVKSGKPLLIVAEDIEGEALATLVVNRLRGGLKVAAVKAPGFGDRRKAMLEDIAILTGGQLISDDLGIKLENVTVDMLGRAKKVVIDKENTTIVNGAGKKKDIEARVGQIKAQIEETTSDYDREKLQERLAKLAGGVAVIRVGGATEIEVKEKKDRVEDALNATRAAVQEGIVPGGGTALLRAKKAVGRIANDNPDVQAGINIVLKALEAPIRQIAENAGVEGSIVVGKVLENKTETFGFDAQKEEYVDMVAKGIIDPAKVVRTALQDAASVAGLLVTTEAMVAELPKEEPAPAMPGGGGMGGMGF</sequence>
<accession>Q1QIL6</accession>
<keyword id="KW-0067">ATP-binding</keyword>
<keyword id="KW-0143">Chaperone</keyword>
<keyword id="KW-0963">Cytoplasm</keyword>
<keyword id="KW-0413">Isomerase</keyword>
<keyword id="KW-0547">Nucleotide-binding</keyword>
<keyword id="KW-1185">Reference proteome</keyword>
<reference key="1">
    <citation type="submission" date="2006-03" db="EMBL/GenBank/DDBJ databases">
        <title>Complete sequence of chromosome of Nitrobacter hamburgensis X14.</title>
        <authorList>
            <consortium name="US DOE Joint Genome Institute"/>
            <person name="Copeland A."/>
            <person name="Lucas S."/>
            <person name="Lapidus A."/>
            <person name="Barry K."/>
            <person name="Detter J.C."/>
            <person name="Glavina del Rio T."/>
            <person name="Hammon N."/>
            <person name="Israni S."/>
            <person name="Dalin E."/>
            <person name="Tice H."/>
            <person name="Pitluck S."/>
            <person name="Chain P."/>
            <person name="Malfatti S."/>
            <person name="Shin M."/>
            <person name="Vergez L."/>
            <person name="Schmutz J."/>
            <person name="Larimer F."/>
            <person name="Land M."/>
            <person name="Hauser L."/>
            <person name="Kyrpides N."/>
            <person name="Ivanova N."/>
            <person name="Ward B."/>
            <person name="Arp D."/>
            <person name="Klotz M."/>
            <person name="Stein L."/>
            <person name="O'Mullan G."/>
            <person name="Starkenburg S."/>
            <person name="Sayavedra L."/>
            <person name="Poret-Peterson A.T."/>
            <person name="Gentry M.E."/>
            <person name="Bruce D."/>
            <person name="Richardson P."/>
        </authorList>
    </citation>
    <scope>NUCLEOTIDE SEQUENCE [LARGE SCALE GENOMIC DNA]</scope>
    <source>
        <strain>DSM 10229 / NCIMB 13809 / X14</strain>
    </source>
</reference>
<dbReference type="EC" id="5.6.1.7" evidence="1"/>
<dbReference type="EMBL" id="CP000319">
    <property type="protein sequence ID" value="ABE63931.1"/>
    <property type="molecule type" value="Genomic_DNA"/>
</dbReference>
<dbReference type="RefSeq" id="WP_011511587.1">
    <property type="nucleotide sequence ID" value="NC_007964.1"/>
</dbReference>
<dbReference type="SMR" id="Q1QIL6"/>
<dbReference type="STRING" id="323097.Nham_3196"/>
<dbReference type="KEGG" id="nha:Nham_3196"/>
<dbReference type="eggNOG" id="COG0459">
    <property type="taxonomic scope" value="Bacteria"/>
</dbReference>
<dbReference type="HOGENOM" id="CLU_016503_3_0_5"/>
<dbReference type="OrthoDB" id="9766614at2"/>
<dbReference type="Proteomes" id="UP000001953">
    <property type="component" value="Chromosome"/>
</dbReference>
<dbReference type="GO" id="GO:0005737">
    <property type="term" value="C:cytoplasm"/>
    <property type="evidence" value="ECO:0007669"/>
    <property type="project" value="UniProtKB-SubCell"/>
</dbReference>
<dbReference type="GO" id="GO:0005524">
    <property type="term" value="F:ATP binding"/>
    <property type="evidence" value="ECO:0007669"/>
    <property type="project" value="UniProtKB-UniRule"/>
</dbReference>
<dbReference type="GO" id="GO:0140662">
    <property type="term" value="F:ATP-dependent protein folding chaperone"/>
    <property type="evidence" value="ECO:0007669"/>
    <property type="project" value="InterPro"/>
</dbReference>
<dbReference type="GO" id="GO:0016853">
    <property type="term" value="F:isomerase activity"/>
    <property type="evidence" value="ECO:0007669"/>
    <property type="project" value="UniProtKB-KW"/>
</dbReference>
<dbReference type="GO" id="GO:0051082">
    <property type="term" value="F:unfolded protein binding"/>
    <property type="evidence" value="ECO:0007669"/>
    <property type="project" value="UniProtKB-UniRule"/>
</dbReference>
<dbReference type="GO" id="GO:0042026">
    <property type="term" value="P:protein refolding"/>
    <property type="evidence" value="ECO:0007669"/>
    <property type="project" value="UniProtKB-UniRule"/>
</dbReference>
<dbReference type="CDD" id="cd03344">
    <property type="entry name" value="GroEL"/>
    <property type="match status" value="1"/>
</dbReference>
<dbReference type="FunFam" id="1.10.560.10:FF:000001">
    <property type="entry name" value="60 kDa chaperonin"/>
    <property type="match status" value="1"/>
</dbReference>
<dbReference type="FunFam" id="3.50.7.10:FF:000001">
    <property type="entry name" value="60 kDa chaperonin"/>
    <property type="match status" value="1"/>
</dbReference>
<dbReference type="Gene3D" id="3.50.7.10">
    <property type="entry name" value="GroEL"/>
    <property type="match status" value="1"/>
</dbReference>
<dbReference type="Gene3D" id="1.10.560.10">
    <property type="entry name" value="GroEL-like equatorial domain"/>
    <property type="match status" value="1"/>
</dbReference>
<dbReference type="Gene3D" id="3.30.260.10">
    <property type="entry name" value="TCP-1-like chaperonin intermediate domain"/>
    <property type="match status" value="1"/>
</dbReference>
<dbReference type="HAMAP" id="MF_00600">
    <property type="entry name" value="CH60"/>
    <property type="match status" value="1"/>
</dbReference>
<dbReference type="InterPro" id="IPR018370">
    <property type="entry name" value="Chaperonin_Cpn60_CS"/>
</dbReference>
<dbReference type="InterPro" id="IPR001844">
    <property type="entry name" value="Cpn60/GroEL"/>
</dbReference>
<dbReference type="InterPro" id="IPR002423">
    <property type="entry name" value="Cpn60/GroEL/TCP-1"/>
</dbReference>
<dbReference type="InterPro" id="IPR027409">
    <property type="entry name" value="GroEL-like_apical_dom_sf"/>
</dbReference>
<dbReference type="InterPro" id="IPR027413">
    <property type="entry name" value="GROEL-like_equatorial_sf"/>
</dbReference>
<dbReference type="InterPro" id="IPR027410">
    <property type="entry name" value="TCP-1-like_intermed_sf"/>
</dbReference>
<dbReference type="NCBIfam" id="TIGR02348">
    <property type="entry name" value="GroEL"/>
    <property type="match status" value="1"/>
</dbReference>
<dbReference type="NCBIfam" id="NF000592">
    <property type="entry name" value="PRK00013.1"/>
    <property type="match status" value="1"/>
</dbReference>
<dbReference type="NCBIfam" id="NF009487">
    <property type="entry name" value="PRK12849.1"/>
    <property type="match status" value="1"/>
</dbReference>
<dbReference type="NCBIfam" id="NF009488">
    <property type="entry name" value="PRK12850.1"/>
    <property type="match status" value="1"/>
</dbReference>
<dbReference type="NCBIfam" id="NF009489">
    <property type="entry name" value="PRK12851.1"/>
    <property type="match status" value="1"/>
</dbReference>
<dbReference type="PANTHER" id="PTHR45633">
    <property type="entry name" value="60 KDA HEAT SHOCK PROTEIN, MITOCHONDRIAL"/>
    <property type="match status" value="1"/>
</dbReference>
<dbReference type="Pfam" id="PF00118">
    <property type="entry name" value="Cpn60_TCP1"/>
    <property type="match status" value="1"/>
</dbReference>
<dbReference type="PRINTS" id="PR00298">
    <property type="entry name" value="CHAPERONIN60"/>
</dbReference>
<dbReference type="SUPFAM" id="SSF52029">
    <property type="entry name" value="GroEL apical domain-like"/>
    <property type="match status" value="1"/>
</dbReference>
<dbReference type="SUPFAM" id="SSF48592">
    <property type="entry name" value="GroEL equatorial domain-like"/>
    <property type="match status" value="1"/>
</dbReference>
<dbReference type="SUPFAM" id="SSF54849">
    <property type="entry name" value="GroEL-intermediate domain like"/>
    <property type="match status" value="1"/>
</dbReference>
<dbReference type="PROSITE" id="PS00296">
    <property type="entry name" value="CHAPERONINS_CPN60"/>
    <property type="match status" value="1"/>
</dbReference>
<protein>
    <recommendedName>
        <fullName evidence="1">Chaperonin GroEL 3</fullName>
        <ecNumber evidence="1">5.6.1.7</ecNumber>
    </recommendedName>
    <alternativeName>
        <fullName evidence="1">60 kDa chaperonin 3</fullName>
    </alternativeName>
    <alternativeName>
        <fullName evidence="1">Chaperonin-60 3</fullName>
        <shortName evidence="1">Cpn60 3</shortName>
    </alternativeName>
</protein>
<organism>
    <name type="scientific">Nitrobacter hamburgensis (strain DSM 10229 / NCIMB 13809 / X14)</name>
    <dbReference type="NCBI Taxonomy" id="323097"/>
    <lineage>
        <taxon>Bacteria</taxon>
        <taxon>Pseudomonadati</taxon>
        <taxon>Pseudomonadota</taxon>
        <taxon>Alphaproteobacteria</taxon>
        <taxon>Hyphomicrobiales</taxon>
        <taxon>Nitrobacteraceae</taxon>
        <taxon>Nitrobacter</taxon>
    </lineage>
</organism>
<gene>
    <name evidence="1" type="primary">groEL3</name>
    <name evidence="1" type="synonym">groL3</name>
    <name type="ordered locus">Nham_3196</name>
</gene>
<proteinExistence type="inferred from homology"/>
<evidence type="ECO:0000255" key="1">
    <source>
        <dbReference type="HAMAP-Rule" id="MF_00600"/>
    </source>
</evidence>
<name>CH603_NITHX</name>